<proteinExistence type="inferred from homology"/>
<accession>F8W2M1</accession>
<accession>E7F3X1</accession>
<comment type="function">
    <text evidence="1">E3 ubiquitin-protein ligase involved in Golgi membrane fusion and regulation of small GTPases. Acts as a regulator of Golgi membrane dynamics during the cell cycle: recruited to Golgi membrane by Rab proteins and regulates postmitotic Golgi membrane fusion. Acts by mediating ubiquitination during mitotic Golgi disassembly, ubiquitination serving as a signal for Golgi reassembly later, after cell division.</text>
</comment>
<comment type="catalytic activity">
    <reaction evidence="1">
        <text>S-ubiquitinyl-[E2 ubiquitin-conjugating enzyme]-L-cysteine + [acceptor protein]-L-lysine = [E2 ubiquitin-conjugating enzyme]-L-cysteine + N(6)-ubiquitinyl-[acceptor protein]-L-lysine.</text>
        <dbReference type="EC" id="2.3.2.26"/>
    </reaction>
</comment>
<comment type="pathway">
    <text evidence="1">Protein modification; protein ubiquitination.</text>
</comment>
<comment type="subcellular location">
    <subcellularLocation>
        <location evidence="1">Golgi apparatus</location>
        <location evidence="1">Golgi stack membrane</location>
    </subcellularLocation>
    <subcellularLocation>
        <location evidence="1">Cytoplasm</location>
    </subcellularLocation>
    <subcellularLocation>
        <location evidence="1">Endoplasmic reticulum</location>
    </subcellularLocation>
</comment>
<gene>
    <name type="primary">hace1</name>
</gene>
<feature type="chain" id="PRO_0000415845" description="E3 ubiquitin-protein ligase HACE1">
    <location>
        <begin position="1"/>
        <end position="904"/>
    </location>
</feature>
<feature type="repeat" description="ANK 1" evidence="1">
    <location>
        <begin position="34"/>
        <end position="63"/>
    </location>
</feature>
<feature type="repeat" description="ANK 2" evidence="1">
    <location>
        <begin position="68"/>
        <end position="97"/>
    </location>
</feature>
<feature type="repeat" description="ANK 3" evidence="1">
    <location>
        <begin position="101"/>
        <end position="130"/>
    </location>
</feature>
<feature type="repeat" description="ANK 4" evidence="1">
    <location>
        <begin position="134"/>
        <end position="163"/>
    </location>
</feature>
<feature type="repeat" description="ANK 5" evidence="1">
    <location>
        <begin position="167"/>
        <end position="196"/>
    </location>
</feature>
<feature type="repeat" description="ANK 6" evidence="1">
    <location>
        <begin position="200"/>
        <end position="230"/>
    </location>
</feature>
<feature type="repeat" description="ANK 7" evidence="1">
    <location>
        <begin position="232"/>
        <end position="261"/>
    </location>
</feature>
<feature type="domain" description="HECT" evidence="2">
    <location>
        <begin position="569"/>
        <end position="904"/>
    </location>
</feature>
<feature type="active site" description="Glycyl thioester intermediate" evidence="2">
    <location>
        <position position="871"/>
    </location>
</feature>
<name>HACE1_DANRE</name>
<protein>
    <recommendedName>
        <fullName>E3 ubiquitin-protein ligase HACE1</fullName>
        <ecNumber evidence="1">2.3.2.26</ecNumber>
    </recommendedName>
    <alternativeName>
        <fullName>HECT domain and ankyrin repeat-containing E3 ubiquitin-protein ligase 1</fullName>
    </alternativeName>
    <alternativeName>
        <fullName evidence="1">HECT-type E3 ubiquitin transferase HACE1</fullName>
    </alternativeName>
</protein>
<organism>
    <name type="scientific">Danio rerio</name>
    <name type="common">Zebrafish</name>
    <name type="synonym">Brachydanio rerio</name>
    <dbReference type="NCBI Taxonomy" id="7955"/>
    <lineage>
        <taxon>Eukaryota</taxon>
        <taxon>Metazoa</taxon>
        <taxon>Chordata</taxon>
        <taxon>Craniata</taxon>
        <taxon>Vertebrata</taxon>
        <taxon>Euteleostomi</taxon>
        <taxon>Actinopterygii</taxon>
        <taxon>Neopterygii</taxon>
        <taxon>Teleostei</taxon>
        <taxon>Ostariophysi</taxon>
        <taxon>Cypriniformes</taxon>
        <taxon>Danionidae</taxon>
        <taxon>Danioninae</taxon>
        <taxon>Danio</taxon>
    </lineage>
</organism>
<reference key="1">
    <citation type="journal article" date="2013" name="Nature">
        <title>The zebrafish reference genome sequence and its relationship to the human genome.</title>
        <authorList>
            <person name="Howe K."/>
            <person name="Clark M.D."/>
            <person name="Torroja C.F."/>
            <person name="Torrance J."/>
            <person name="Berthelot C."/>
            <person name="Muffato M."/>
            <person name="Collins J.E."/>
            <person name="Humphray S."/>
            <person name="McLaren K."/>
            <person name="Matthews L."/>
            <person name="McLaren S."/>
            <person name="Sealy I."/>
            <person name="Caccamo M."/>
            <person name="Churcher C."/>
            <person name="Scott C."/>
            <person name="Barrett J.C."/>
            <person name="Koch R."/>
            <person name="Rauch G.J."/>
            <person name="White S."/>
            <person name="Chow W."/>
            <person name="Kilian B."/>
            <person name="Quintais L.T."/>
            <person name="Guerra-Assuncao J.A."/>
            <person name="Zhou Y."/>
            <person name="Gu Y."/>
            <person name="Yen J."/>
            <person name="Vogel J.H."/>
            <person name="Eyre T."/>
            <person name="Redmond S."/>
            <person name="Banerjee R."/>
            <person name="Chi J."/>
            <person name="Fu B."/>
            <person name="Langley E."/>
            <person name="Maguire S.F."/>
            <person name="Laird G.K."/>
            <person name="Lloyd D."/>
            <person name="Kenyon E."/>
            <person name="Donaldson S."/>
            <person name="Sehra H."/>
            <person name="Almeida-King J."/>
            <person name="Loveland J."/>
            <person name="Trevanion S."/>
            <person name="Jones M."/>
            <person name="Quail M."/>
            <person name="Willey D."/>
            <person name="Hunt A."/>
            <person name="Burton J."/>
            <person name="Sims S."/>
            <person name="McLay K."/>
            <person name="Plumb B."/>
            <person name="Davis J."/>
            <person name="Clee C."/>
            <person name="Oliver K."/>
            <person name="Clark R."/>
            <person name="Riddle C."/>
            <person name="Elliot D."/>
            <person name="Threadgold G."/>
            <person name="Harden G."/>
            <person name="Ware D."/>
            <person name="Begum S."/>
            <person name="Mortimore B."/>
            <person name="Kerry G."/>
            <person name="Heath P."/>
            <person name="Phillimore B."/>
            <person name="Tracey A."/>
            <person name="Corby N."/>
            <person name="Dunn M."/>
            <person name="Johnson C."/>
            <person name="Wood J."/>
            <person name="Clark S."/>
            <person name="Pelan S."/>
            <person name="Griffiths G."/>
            <person name="Smith M."/>
            <person name="Glithero R."/>
            <person name="Howden P."/>
            <person name="Barker N."/>
            <person name="Lloyd C."/>
            <person name="Stevens C."/>
            <person name="Harley J."/>
            <person name="Holt K."/>
            <person name="Panagiotidis G."/>
            <person name="Lovell J."/>
            <person name="Beasley H."/>
            <person name="Henderson C."/>
            <person name="Gordon D."/>
            <person name="Auger K."/>
            <person name="Wright D."/>
            <person name="Collins J."/>
            <person name="Raisen C."/>
            <person name="Dyer L."/>
            <person name="Leung K."/>
            <person name="Robertson L."/>
            <person name="Ambridge K."/>
            <person name="Leongamornlert D."/>
            <person name="McGuire S."/>
            <person name="Gilderthorp R."/>
            <person name="Griffiths C."/>
            <person name="Manthravadi D."/>
            <person name="Nichol S."/>
            <person name="Barker G."/>
            <person name="Whitehead S."/>
            <person name="Kay M."/>
            <person name="Brown J."/>
            <person name="Murnane C."/>
            <person name="Gray E."/>
            <person name="Humphries M."/>
            <person name="Sycamore N."/>
            <person name="Barker D."/>
            <person name="Saunders D."/>
            <person name="Wallis J."/>
            <person name="Babbage A."/>
            <person name="Hammond S."/>
            <person name="Mashreghi-Mohammadi M."/>
            <person name="Barr L."/>
            <person name="Martin S."/>
            <person name="Wray P."/>
            <person name="Ellington A."/>
            <person name="Matthews N."/>
            <person name="Ellwood M."/>
            <person name="Woodmansey R."/>
            <person name="Clark G."/>
            <person name="Cooper J."/>
            <person name="Tromans A."/>
            <person name="Grafham D."/>
            <person name="Skuce C."/>
            <person name="Pandian R."/>
            <person name="Andrews R."/>
            <person name="Harrison E."/>
            <person name="Kimberley A."/>
            <person name="Garnett J."/>
            <person name="Fosker N."/>
            <person name="Hall R."/>
            <person name="Garner P."/>
            <person name="Kelly D."/>
            <person name="Bird C."/>
            <person name="Palmer S."/>
            <person name="Gehring I."/>
            <person name="Berger A."/>
            <person name="Dooley C.M."/>
            <person name="Ersan-Urun Z."/>
            <person name="Eser C."/>
            <person name="Geiger H."/>
            <person name="Geisler M."/>
            <person name="Karotki L."/>
            <person name="Kirn A."/>
            <person name="Konantz J."/>
            <person name="Konantz M."/>
            <person name="Oberlander M."/>
            <person name="Rudolph-Geiger S."/>
            <person name="Teucke M."/>
            <person name="Lanz C."/>
            <person name="Raddatz G."/>
            <person name="Osoegawa K."/>
            <person name="Zhu B."/>
            <person name="Rapp A."/>
            <person name="Widaa S."/>
            <person name="Langford C."/>
            <person name="Yang F."/>
            <person name="Schuster S.C."/>
            <person name="Carter N.P."/>
            <person name="Harrow J."/>
            <person name="Ning Z."/>
            <person name="Herrero J."/>
            <person name="Searle S.M."/>
            <person name="Enright A."/>
            <person name="Geisler R."/>
            <person name="Plasterk R.H."/>
            <person name="Lee C."/>
            <person name="Westerfield M."/>
            <person name="de Jong P.J."/>
            <person name="Zon L.I."/>
            <person name="Postlethwait J.H."/>
            <person name="Nusslein-Volhard C."/>
            <person name="Hubbard T.J."/>
            <person name="Roest Crollius H."/>
            <person name="Rogers J."/>
            <person name="Stemple D.L."/>
        </authorList>
    </citation>
    <scope>NUCLEOTIDE SEQUENCE [LARGE SCALE GENOMIC DNA]</scope>
    <source>
        <strain>Tuebingen</strain>
    </source>
</reference>
<evidence type="ECO:0000250" key="1">
    <source>
        <dbReference type="UniProtKB" id="Q8IYU2"/>
    </source>
</evidence>
<evidence type="ECO:0000255" key="2">
    <source>
        <dbReference type="PROSITE-ProRule" id="PRU00104"/>
    </source>
</evidence>
<dbReference type="EC" id="2.3.2.26" evidence="1"/>
<dbReference type="EMBL" id="CU928063">
    <property type="status" value="NOT_ANNOTATED_CDS"/>
    <property type="molecule type" value="Genomic_DNA"/>
</dbReference>
<dbReference type="SMR" id="F8W2M1"/>
<dbReference type="FunCoup" id="F8W2M1">
    <property type="interactions" value="1416"/>
</dbReference>
<dbReference type="STRING" id="7955.ENSDARP00000124679"/>
<dbReference type="PaxDb" id="7955-ENSDARP00000084288"/>
<dbReference type="AGR" id="ZFIN:ZDB-GENE-110411-52"/>
<dbReference type="ZFIN" id="ZDB-GENE-110411-52">
    <property type="gene designation" value="hace1"/>
</dbReference>
<dbReference type="eggNOG" id="KOG0939">
    <property type="taxonomic scope" value="Eukaryota"/>
</dbReference>
<dbReference type="eggNOG" id="KOG4177">
    <property type="taxonomic scope" value="Eukaryota"/>
</dbReference>
<dbReference type="InParanoid" id="F8W2M1"/>
<dbReference type="OMA" id="QDHQDAT"/>
<dbReference type="Reactome" id="R-DRE-983168">
    <property type="pathway name" value="Antigen processing: Ubiquitination &amp; Proteasome degradation"/>
</dbReference>
<dbReference type="UniPathway" id="UPA00143"/>
<dbReference type="PRO" id="PR:F8W2M1"/>
<dbReference type="Proteomes" id="UP000000437">
    <property type="component" value="Unplaced"/>
</dbReference>
<dbReference type="GO" id="GO:0005737">
    <property type="term" value="C:cytoplasm"/>
    <property type="evidence" value="ECO:0000318"/>
    <property type="project" value="GO_Central"/>
</dbReference>
<dbReference type="GO" id="GO:0005783">
    <property type="term" value="C:endoplasmic reticulum"/>
    <property type="evidence" value="ECO:0007669"/>
    <property type="project" value="UniProtKB-SubCell"/>
</dbReference>
<dbReference type="GO" id="GO:0032580">
    <property type="term" value="C:Golgi cisterna membrane"/>
    <property type="evidence" value="ECO:0007669"/>
    <property type="project" value="UniProtKB-SubCell"/>
</dbReference>
<dbReference type="GO" id="GO:0000139">
    <property type="term" value="C:Golgi membrane"/>
    <property type="evidence" value="ECO:0000250"/>
    <property type="project" value="UniProtKB"/>
</dbReference>
<dbReference type="GO" id="GO:0005634">
    <property type="term" value="C:nucleus"/>
    <property type="evidence" value="ECO:0000318"/>
    <property type="project" value="GO_Central"/>
</dbReference>
<dbReference type="GO" id="GO:0031267">
    <property type="term" value="F:small GTPase binding"/>
    <property type="evidence" value="ECO:0000250"/>
    <property type="project" value="UniProtKB"/>
</dbReference>
<dbReference type="GO" id="GO:0061630">
    <property type="term" value="F:ubiquitin protein ligase activity"/>
    <property type="evidence" value="ECO:0000318"/>
    <property type="project" value="GO_Central"/>
</dbReference>
<dbReference type="GO" id="GO:0004842">
    <property type="term" value="F:ubiquitin-protein transferase activity"/>
    <property type="evidence" value="ECO:0000250"/>
    <property type="project" value="UniProtKB"/>
</dbReference>
<dbReference type="GO" id="GO:0003190">
    <property type="term" value="P:atrioventricular valve formation"/>
    <property type="evidence" value="ECO:0000315"/>
    <property type="project" value="ZFIN"/>
</dbReference>
<dbReference type="GO" id="GO:0003208">
    <property type="term" value="P:cardiac ventricle morphogenesis"/>
    <property type="evidence" value="ECO:0000315"/>
    <property type="project" value="ZFIN"/>
</dbReference>
<dbReference type="GO" id="GO:0007030">
    <property type="term" value="P:Golgi organization"/>
    <property type="evidence" value="ECO:0000250"/>
    <property type="project" value="UniProtKB"/>
</dbReference>
<dbReference type="GO" id="GO:0001947">
    <property type="term" value="P:heart looping"/>
    <property type="evidence" value="ECO:0000315"/>
    <property type="project" value="ZFIN"/>
</dbReference>
<dbReference type="GO" id="GO:0061025">
    <property type="term" value="P:membrane fusion"/>
    <property type="evidence" value="ECO:0000250"/>
    <property type="project" value="UniProtKB"/>
</dbReference>
<dbReference type="GO" id="GO:1903427">
    <property type="term" value="P:negative regulation of reactive oxygen species biosynthetic process"/>
    <property type="evidence" value="ECO:0000315"/>
    <property type="project" value="ZFIN"/>
</dbReference>
<dbReference type="GO" id="GO:0070936">
    <property type="term" value="P:protein K48-linked ubiquitination"/>
    <property type="evidence" value="ECO:0000250"/>
    <property type="project" value="UniProtKB"/>
</dbReference>
<dbReference type="GO" id="GO:0016567">
    <property type="term" value="P:protein ubiquitination"/>
    <property type="evidence" value="ECO:0000250"/>
    <property type="project" value="UniProtKB"/>
</dbReference>
<dbReference type="GO" id="GO:0030334">
    <property type="term" value="P:regulation of cell migration"/>
    <property type="evidence" value="ECO:0000250"/>
    <property type="project" value="UniProtKB"/>
</dbReference>
<dbReference type="GO" id="GO:0006511">
    <property type="term" value="P:ubiquitin-dependent protein catabolic process"/>
    <property type="evidence" value="ECO:0000250"/>
    <property type="project" value="UniProtKB"/>
</dbReference>
<dbReference type="CDD" id="cd00078">
    <property type="entry name" value="HECTc"/>
    <property type="match status" value="1"/>
</dbReference>
<dbReference type="FunFam" id="3.90.1750.10:FF:000026">
    <property type="entry name" value="E3 ubiquitin-protein ligase HACE1"/>
    <property type="match status" value="1"/>
</dbReference>
<dbReference type="FunFam" id="1.25.40.20:FF:000051">
    <property type="entry name" value="E3 ubiquitin-protein ligase HACE1 isoform X1"/>
    <property type="match status" value="1"/>
</dbReference>
<dbReference type="FunFam" id="3.30.2410.10:FF:000016">
    <property type="entry name" value="E3 ubiquitin-protein ligase HACE1 isoform X1"/>
    <property type="match status" value="1"/>
</dbReference>
<dbReference type="FunFam" id="3.90.1750.10:FF:000019">
    <property type="entry name" value="E3 ubiquitin-protein ligase HACE1 isoform X1"/>
    <property type="match status" value="1"/>
</dbReference>
<dbReference type="FunFam" id="3.30.2160.10:FF:000001">
    <property type="entry name" value="E3 ubiquitin-protein ligase NEDD4-like"/>
    <property type="match status" value="1"/>
</dbReference>
<dbReference type="FunFam" id="1.25.40.20:FF:000256">
    <property type="entry name" value="HECT domain and ankyrin repeat containing E3 ubiquitin protein ligase 1"/>
    <property type="match status" value="1"/>
</dbReference>
<dbReference type="Gene3D" id="1.25.40.20">
    <property type="entry name" value="Ankyrin repeat-containing domain"/>
    <property type="match status" value="2"/>
</dbReference>
<dbReference type="Gene3D" id="3.30.2160.10">
    <property type="entry name" value="Hect, E3 ligase catalytic domain"/>
    <property type="match status" value="1"/>
</dbReference>
<dbReference type="Gene3D" id="3.30.2410.10">
    <property type="entry name" value="Hect, E3 ligase catalytic domain"/>
    <property type="match status" value="1"/>
</dbReference>
<dbReference type="Gene3D" id="3.90.1750.10">
    <property type="entry name" value="Hect, E3 ligase catalytic domains"/>
    <property type="match status" value="1"/>
</dbReference>
<dbReference type="InterPro" id="IPR002110">
    <property type="entry name" value="Ankyrin_rpt"/>
</dbReference>
<dbReference type="InterPro" id="IPR036770">
    <property type="entry name" value="Ankyrin_rpt-contain_sf"/>
</dbReference>
<dbReference type="InterPro" id="IPR050409">
    <property type="entry name" value="E3_ubiq-protein_ligase"/>
</dbReference>
<dbReference type="InterPro" id="IPR000569">
    <property type="entry name" value="HECT_dom"/>
</dbReference>
<dbReference type="InterPro" id="IPR035983">
    <property type="entry name" value="Hect_E3_ubiquitin_ligase"/>
</dbReference>
<dbReference type="PANTHER" id="PTHR11254:SF363">
    <property type="entry name" value="E3 UBIQUITIN-PROTEIN LIGASE HACE1"/>
    <property type="match status" value="1"/>
</dbReference>
<dbReference type="PANTHER" id="PTHR11254">
    <property type="entry name" value="HECT DOMAIN UBIQUITIN-PROTEIN LIGASE"/>
    <property type="match status" value="1"/>
</dbReference>
<dbReference type="Pfam" id="PF12796">
    <property type="entry name" value="Ank_2"/>
    <property type="match status" value="2"/>
</dbReference>
<dbReference type="Pfam" id="PF13637">
    <property type="entry name" value="Ank_4"/>
    <property type="match status" value="1"/>
</dbReference>
<dbReference type="Pfam" id="PF00632">
    <property type="entry name" value="HECT"/>
    <property type="match status" value="1"/>
</dbReference>
<dbReference type="PRINTS" id="PR01415">
    <property type="entry name" value="ANKYRIN"/>
</dbReference>
<dbReference type="SMART" id="SM00248">
    <property type="entry name" value="ANK"/>
    <property type="match status" value="6"/>
</dbReference>
<dbReference type="SMART" id="SM00119">
    <property type="entry name" value="HECTc"/>
    <property type="match status" value="1"/>
</dbReference>
<dbReference type="SUPFAM" id="SSF48403">
    <property type="entry name" value="Ankyrin repeat"/>
    <property type="match status" value="1"/>
</dbReference>
<dbReference type="SUPFAM" id="SSF56204">
    <property type="entry name" value="Hect, E3 ligase catalytic domain"/>
    <property type="match status" value="1"/>
</dbReference>
<dbReference type="PROSITE" id="PS50297">
    <property type="entry name" value="ANK_REP_REGION"/>
    <property type="match status" value="1"/>
</dbReference>
<dbReference type="PROSITE" id="PS50088">
    <property type="entry name" value="ANK_REPEAT"/>
    <property type="match status" value="5"/>
</dbReference>
<dbReference type="PROSITE" id="PS50237">
    <property type="entry name" value="HECT"/>
    <property type="match status" value="1"/>
</dbReference>
<sequence>MERAMEHLNVQLNRLTRSLRRARTVELPEDSETAVYTLMPMVMADQHRSVSELLLNSKFDVNYAFGRVKRSLLHIAANCGSVECLVLLLKRGANPNYQDISGCTPLHLAARNGQKKCMGRLLEYNADVNICNNEGLTAIHWLAVNGRTELLHDLVQHVTNVDVEDAMGQTALHVACQNGHKTTVQCLLDSGADINRPNVSGATPLYFACSHGQRDTAQILLLRGAKYLPDRNGVTPLDLCVQGGYGETCEILIQHHGRLFQTLIQMTQNDDIKENMLRQVLEHVSQQNDSNYQRILTSLAEVATTNGHKLLSLSSNFEVQTKSLLRIIRIFCHVFCLGPSSPNNGNDMGYNGNKTPRSQVFKPLELLWHSLDEWLVLISTELEKEITDTTRSSSGNDIASLFLKKQEVDHSVSSENPQLLLDASSVMKTPEVYADGQDVISMIANRLSAVIQAFYMCCSCQMPHGMTSPRFIEFVCKHDEVLKCFVTRNPKIIFNHFHFLLECPELMSRFMHIIKGQPFKDRCEWFYEHLLAGQPDSDMVHRPVNENDILLVHRDSLFRSSCEVVSKSSNEKLKQGIAVRFHGEEGMGQGVVREWFDILSNEIINPDYALFTQSADGTTFQPNSNSSVNPDHLNYFRFAGQILGLALYHRQLVNIYFTRSFYKHILGIPVSYQDVSSIDPEYAKNLQWILDNDISDLGLELTFSVETDVFGTMEEVPLKPGGTTIQVTQDNKEEYVQLVTELRMTRAIQPQINAFLQGFHTFIPPSLIQLFDEYELELLLSGMPEIDVMDWKRNTEYTSGYDLQEPVIQWFWEVVENLTQEERVLLLQFVTGSSRVPHGGFAFLMGGSGLQKFTVAAVPYTSNLLPTSSTCINMLKLPEYPSKDVLRDRLLVALHCGSYGYTMA</sequence>
<keyword id="KW-0040">ANK repeat</keyword>
<keyword id="KW-0131">Cell cycle</keyword>
<keyword id="KW-0963">Cytoplasm</keyword>
<keyword id="KW-0256">Endoplasmic reticulum</keyword>
<keyword id="KW-0333">Golgi apparatus</keyword>
<keyword id="KW-0472">Membrane</keyword>
<keyword id="KW-1185">Reference proteome</keyword>
<keyword id="KW-0677">Repeat</keyword>
<keyword id="KW-0808">Transferase</keyword>
<keyword id="KW-0833">Ubl conjugation pathway</keyword>